<accession>Q3SX20</accession>
<keyword id="KW-0458">Lysosome</keyword>
<keyword id="KW-0472">Membrane</keyword>
<keyword id="KW-0597">Phosphoprotein</keyword>
<keyword id="KW-1185">Reference proteome</keyword>
<name>BORC6_BOVIN</name>
<sequence length="353" mass="37171">MESPRGRPGPETDLLALGEQQAAIFGDGPGQTPSERPSDLRLSEDEEAENVGGASCHPKASLKTSSCSFVHPPEWEAPEDKPGRGGTFSGAGSRLGAPDPEFDLHGSSRRKDPEPPEAKPESERVCRRGSPVGGGMDVEQKEDDNEAAEAGRGGRSFSSRLQDSRSLDGLSGACGGPASSGGAESGAGGGRRATISSPLELEGTVSRHGDLTHFVANNLQLKIRLSGAPQPPPPAPTRPCSAPTPTPAIPPIDPDVLRDLERLSRELGGRVDRLLRGLGGAVQELTALSVGCIQTYRDAVDSLGEAVDMSIKGMYTLLARCEELERALQPVQGLARQVRDIRRTLEVLEALCK</sequence>
<comment type="function">
    <text evidence="1">As part of the BORC complex may play a role in lysosomes movement and localization at the cell periphery. Associated with the cytosolic face of lysosomes, the BORC complex may recruit ARL8B and couple lysosomes to microtubule plus-end-directed kinesin motor.</text>
</comment>
<comment type="subunit">
    <text evidence="1">Component of the BLOC-one-related complex (BORC) which is composed of BLOC1S1, BLOC1S2, BORCS5, BORCS6, BORCS7, BORCS8, KXD1 and SNAPIN.</text>
</comment>
<comment type="subcellular location">
    <subcellularLocation>
        <location evidence="1">Lysosome membrane</location>
    </subcellularLocation>
</comment>
<comment type="similarity">
    <text evidence="4">Belongs to the BORCS6 family.</text>
</comment>
<comment type="sequence caution" evidence="4">
    <conflict type="erroneous initiation">
        <sequence resource="EMBL-CDS" id="AAI04552"/>
    </conflict>
    <text>Truncated N-terminus.</text>
</comment>
<evidence type="ECO:0000250" key="1">
    <source>
        <dbReference type="UniProtKB" id="Q96GS4"/>
    </source>
</evidence>
<evidence type="ECO:0000250" key="2">
    <source>
        <dbReference type="UniProtKB" id="Q9D6W8"/>
    </source>
</evidence>
<evidence type="ECO:0000256" key="3">
    <source>
        <dbReference type="SAM" id="MobiDB-lite"/>
    </source>
</evidence>
<evidence type="ECO:0000305" key="4"/>
<gene>
    <name evidence="1" type="primary">BORCS6</name>
</gene>
<organism>
    <name type="scientific">Bos taurus</name>
    <name type="common">Bovine</name>
    <dbReference type="NCBI Taxonomy" id="9913"/>
    <lineage>
        <taxon>Eukaryota</taxon>
        <taxon>Metazoa</taxon>
        <taxon>Chordata</taxon>
        <taxon>Craniata</taxon>
        <taxon>Vertebrata</taxon>
        <taxon>Euteleostomi</taxon>
        <taxon>Mammalia</taxon>
        <taxon>Eutheria</taxon>
        <taxon>Laurasiatheria</taxon>
        <taxon>Artiodactyla</taxon>
        <taxon>Ruminantia</taxon>
        <taxon>Pecora</taxon>
        <taxon>Bovidae</taxon>
        <taxon>Bovinae</taxon>
        <taxon>Bos</taxon>
    </lineage>
</organism>
<dbReference type="EMBL" id="BC104551">
    <property type="protein sequence ID" value="AAI04552.1"/>
    <property type="status" value="ALT_INIT"/>
    <property type="molecule type" value="mRNA"/>
</dbReference>
<dbReference type="RefSeq" id="NP_001035655.2">
    <property type="nucleotide sequence ID" value="NM_001040565.1"/>
</dbReference>
<dbReference type="FunCoup" id="Q3SX20">
    <property type="interactions" value="583"/>
</dbReference>
<dbReference type="STRING" id="9913.ENSBTAP00000002241"/>
<dbReference type="PaxDb" id="9913-ENSBTAP00000002241"/>
<dbReference type="GeneID" id="539395"/>
<dbReference type="KEGG" id="bta:539395"/>
<dbReference type="CTD" id="54785"/>
<dbReference type="eggNOG" id="KOG4514">
    <property type="taxonomic scope" value="Eukaryota"/>
</dbReference>
<dbReference type="HOGENOM" id="CLU_081385_1_0_1"/>
<dbReference type="InParanoid" id="Q3SX20"/>
<dbReference type="OrthoDB" id="21270at2759"/>
<dbReference type="Proteomes" id="UP000009136">
    <property type="component" value="Unplaced"/>
</dbReference>
<dbReference type="GO" id="GO:0099078">
    <property type="term" value="C:BORC complex"/>
    <property type="evidence" value="ECO:0000250"/>
    <property type="project" value="UniProtKB"/>
</dbReference>
<dbReference type="GO" id="GO:0005765">
    <property type="term" value="C:lysosomal membrane"/>
    <property type="evidence" value="ECO:0007669"/>
    <property type="project" value="UniProtKB-SubCell"/>
</dbReference>
<dbReference type="GO" id="GO:0032418">
    <property type="term" value="P:lysosome localization"/>
    <property type="evidence" value="ECO:0000250"/>
    <property type="project" value="UniProtKB"/>
</dbReference>
<dbReference type="InterPro" id="IPR019314">
    <property type="entry name" value="BORCS6"/>
</dbReference>
<dbReference type="InterPro" id="IPR046465">
    <property type="entry name" value="BORCS6_C"/>
</dbReference>
<dbReference type="PANTHER" id="PTHR13440">
    <property type="entry name" value="BLOC-1 RELATED COMPLEX SUBUNIT 6"/>
    <property type="match status" value="1"/>
</dbReference>
<dbReference type="PANTHER" id="PTHR13440:SF8">
    <property type="entry name" value="BLOC-1-RELATED COMPLEX SUBUNIT 6"/>
    <property type="match status" value="1"/>
</dbReference>
<dbReference type="Pfam" id="PF10157">
    <property type="entry name" value="BORCS6"/>
    <property type="match status" value="1"/>
</dbReference>
<proteinExistence type="evidence at transcript level"/>
<feature type="chain" id="PRO_0000286826" description="BLOC-1-related complex subunit 6">
    <location>
        <begin position="1"/>
        <end position="353"/>
    </location>
</feature>
<feature type="region of interest" description="Disordered" evidence="3">
    <location>
        <begin position="23"/>
        <end position="194"/>
    </location>
</feature>
<feature type="region of interest" description="Disordered" evidence="3">
    <location>
        <begin position="225"/>
        <end position="253"/>
    </location>
</feature>
<feature type="compositionally biased region" description="Basic and acidic residues" evidence="3">
    <location>
        <begin position="102"/>
        <end position="126"/>
    </location>
</feature>
<feature type="compositionally biased region" description="Gly residues" evidence="3">
    <location>
        <begin position="172"/>
        <end position="191"/>
    </location>
</feature>
<feature type="compositionally biased region" description="Pro residues" evidence="3">
    <location>
        <begin position="229"/>
        <end position="253"/>
    </location>
</feature>
<feature type="modified residue" description="Phosphoserine" evidence="2">
    <location>
        <position position="130"/>
    </location>
</feature>
<feature type="modified residue" description="Phosphoserine" evidence="1">
    <location>
        <position position="166"/>
    </location>
</feature>
<feature type="modified residue" description="Phosphothreonine" evidence="1">
    <location>
        <position position="194"/>
    </location>
</feature>
<feature type="modified residue" description="Phosphoserine" evidence="1">
    <location>
        <position position="197"/>
    </location>
</feature>
<reference key="1">
    <citation type="submission" date="2005-09" db="EMBL/GenBank/DDBJ databases">
        <authorList>
            <consortium name="NIH - Mammalian Gene Collection (MGC) project"/>
        </authorList>
    </citation>
    <scope>NUCLEOTIDE SEQUENCE [LARGE SCALE MRNA]</scope>
    <source>
        <strain>Hereford</strain>
        <tissue>Uterus</tissue>
    </source>
</reference>
<protein>
    <recommendedName>
        <fullName evidence="4">BLOC-1-related complex subunit 6</fullName>
    </recommendedName>
</protein>